<sequence>MGQKVHPHGLRVGVIKEWDAKWYADKKNFADNLVEDHKIRNFVKKNSYAAGVSRIEIERAAKRIKLNIYTAKPGMIIGKGGQGIESLKNKLQKIVSNKNILINIVEVKRPEADAQLIAENIAQQLEKRIAFRRAMKQSIQRAMRSGVKGIKTACSGRLAGAEIARTEHYNEGTIPLQTLRADIDYGFAEADTTYGKIGVKVWVYKGEVLPARKNINEKEEANA</sequence>
<proteinExistence type="inferred from homology"/>
<gene>
    <name evidence="1" type="primary">rpsC</name>
    <name type="ordered locus">CBO3474</name>
    <name type="ordered locus">CLC_3419</name>
</gene>
<protein>
    <recommendedName>
        <fullName evidence="1">Small ribosomal subunit protein uS3</fullName>
    </recommendedName>
    <alternativeName>
        <fullName evidence="2">30S ribosomal protein S3</fullName>
    </alternativeName>
</protein>
<accession>A5I7K0</accession>
<accession>A7G8T2</accession>
<reference key="1">
    <citation type="journal article" date="2007" name="Genome Res.">
        <title>Genome sequence of a proteolytic (Group I) Clostridium botulinum strain Hall A and comparative analysis of the clostridial genomes.</title>
        <authorList>
            <person name="Sebaihia M."/>
            <person name="Peck M.W."/>
            <person name="Minton N.P."/>
            <person name="Thomson N.R."/>
            <person name="Holden M.T.G."/>
            <person name="Mitchell W.J."/>
            <person name="Carter A.T."/>
            <person name="Bentley S.D."/>
            <person name="Mason D.R."/>
            <person name="Crossman L."/>
            <person name="Paul C.J."/>
            <person name="Ivens A."/>
            <person name="Wells-Bennik M.H.J."/>
            <person name="Davis I.J."/>
            <person name="Cerdeno-Tarraga A.M."/>
            <person name="Churcher C."/>
            <person name="Quail M.A."/>
            <person name="Chillingworth T."/>
            <person name="Feltwell T."/>
            <person name="Fraser A."/>
            <person name="Goodhead I."/>
            <person name="Hance Z."/>
            <person name="Jagels K."/>
            <person name="Larke N."/>
            <person name="Maddison M."/>
            <person name="Moule S."/>
            <person name="Mungall K."/>
            <person name="Norbertczak H."/>
            <person name="Rabbinowitsch E."/>
            <person name="Sanders M."/>
            <person name="Simmonds M."/>
            <person name="White B."/>
            <person name="Whithead S."/>
            <person name="Parkhill J."/>
        </authorList>
    </citation>
    <scope>NUCLEOTIDE SEQUENCE [LARGE SCALE GENOMIC DNA]</scope>
    <source>
        <strain>Hall / ATCC 3502 / NCTC 13319 / Type A</strain>
    </source>
</reference>
<reference key="2">
    <citation type="journal article" date="2007" name="PLoS ONE">
        <title>Analysis of the neurotoxin complex genes in Clostridium botulinum A1-A4 and B1 strains: BoNT/A3, /Ba4 and /B1 clusters are located within plasmids.</title>
        <authorList>
            <person name="Smith T.J."/>
            <person name="Hill K.K."/>
            <person name="Foley B.T."/>
            <person name="Detter J.C."/>
            <person name="Munk A.C."/>
            <person name="Bruce D.C."/>
            <person name="Doggett N.A."/>
            <person name="Smith L.A."/>
            <person name="Marks J.D."/>
            <person name="Xie G."/>
            <person name="Brettin T.S."/>
        </authorList>
    </citation>
    <scope>NUCLEOTIDE SEQUENCE [LARGE SCALE GENOMIC DNA]</scope>
    <source>
        <strain>Hall / ATCC 3502 / NCTC 13319 / Type A</strain>
    </source>
</reference>
<dbReference type="EMBL" id="CP000727">
    <property type="protein sequence ID" value="ABS37001.1"/>
    <property type="molecule type" value="Genomic_DNA"/>
</dbReference>
<dbReference type="EMBL" id="AM412317">
    <property type="protein sequence ID" value="CAL85035.1"/>
    <property type="molecule type" value="Genomic_DNA"/>
</dbReference>
<dbReference type="RefSeq" id="WP_003385450.1">
    <property type="nucleotide sequence ID" value="NC_009698.1"/>
</dbReference>
<dbReference type="RefSeq" id="YP_001255956.1">
    <property type="nucleotide sequence ID" value="NC_009495.1"/>
</dbReference>
<dbReference type="RefSeq" id="YP_001389197.1">
    <property type="nucleotide sequence ID" value="NC_009698.1"/>
</dbReference>
<dbReference type="SMR" id="A5I7K0"/>
<dbReference type="GeneID" id="5184367"/>
<dbReference type="KEGG" id="cbh:CLC_3419"/>
<dbReference type="KEGG" id="cbo:CBO3474"/>
<dbReference type="PATRIC" id="fig|413999.7.peg.3451"/>
<dbReference type="HOGENOM" id="CLU_058591_0_2_9"/>
<dbReference type="PRO" id="PR:A5I7K0"/>
<dbReference type="Proteomes" id="UP000001986">
    <property type="component" value="Chromosome"/>
</dbReference>
<dbReference type="GO" id="GO:0022627">
    <property type="term" value="C:cytosolic small ribosomal subunit"/>
    <property type="evidence" value="ECO:0000318"/>
    <property type="project" value="GO_Central"/>
</dbReference>
<dbReference type="GO" id="GO:0003729">
    <property type="term" value="F:mRNA binding"/>
    <property type="evidence" value="ECO:0007669"/>
    <property type="project" value="UniProtKB-UniRule"/>
</dbReference>
<dbReference type="GO" id="GO:0019843">
    <property type="term" value="F:rRNA binding"/>
    <property type="evidence" value="ECO:0007669"/>
    <property type="project" value="UniProtKB-UniRule"/>
</dbReference>
<dbReference type="GO" id="GO:0003735">
    <property type="term" value="F:structural constituent of ribosome"/>
    <property type="evidence" value="ECO:0000318"/>
    <property type="project" value="GO_Central"/>
</dbReference>
<dbReference type="GO" id="GO:0006412">
    <property type="term" value="P:translation"/>
    <property type="evidence" value="ECO:0007669"/>
    <property type="project" value="UniProtKB-UniRule"/>
</dbReference>
<dbReference type="CDD" id="cd02412">
    <property type="entry name" value="KH-II_30S_S3"/>
    <property type="match status" value="1"/>
</dbReference>
<dbReference type="FunFam" id="3.30.1140.32:FF:000002">
    <property type="entry name" value="30S ribosomal protein S3"/>
    <property type="match status" value="1"/>
</dbReference>
<dbReference type="FunFam" id="3.30.300.20:FF:000001">
    <property type="entry name" value="30S ribosomal protein S3"/>
    <property type="match status" value="1"/>
</dbReference>
<dbReference type="Gene3D" id="3.30.300.20">
    <property type="match status" value="1"/>
</dbReference>
<dbReference type="Gene3D" id="3.30.1140.32">
    <property type="entry name" value="Ribosomal protein S3, C-terminal domain"/>
    <property type="match status" value="1"/>
</dbReference>
<dbReference type="HAMAP" id="MF_01309_B">
    <property type="entry name" value="Ribosomal_uS3_B"/>
    <property type="match status" value="1"/>
</dbReference>
<dbReference type="InterPro" id="IPR004087">
    <property type="entry name" value="KH_dom"/>
</dbReference>
<dbReference type="InterPro" id="IPR015946">
    <property type="entry name" value="KH_dom-like_a/b"/>
</dbReference>
<dbReference type="InterPro" id="IPR004044">
    <property type="entry name" value="KH_dom_type_2"/>
</dbReference>
<dbReference type="InterPro" id="IPR009019">
    <property type="entry name" value="KH_sf_prok-type"/>
</dbReference>
<dbReference type="InterPro" id="IPR036419">
    <property type="entry name" value="Ribosomal_S3_C_sf"/>
</dbReference>
<dbReference type="InterPro" id="IPR005704">
    <property type="entry name" value="Ribosomal_uS3_bac-typ"/>
</dbReference>
<dbReference type="InterPro" id="IPR001351">
    <property type="entry name" value="Ribosomal_uS3_C"/>
</dbReference>
<dbReference type="InterPro" id="IPR018280">
    <property type="entry name" value="Ribosomal_uS3_CS"/>
</dbReference>
<dbReference type="NCBIfam" id="TIGR01009">
    <property type="entry name" value="rpsC_bact"/>
    <property type="match status" value="1"/>
</dbReference>
<dbReference type="PANTHER" id="PTHR11760">
    <property type="entry name" value="30S/40S RIBOSOMAL PROTEIN S3"/>
    <property type="match status" value="1"/>
</dbReference>
<dbReference type="PANTHER" id="PTHR11760:SF19">
    <property type="entry name" value="SMALL RIBOSOMAL SUBUNIT PROTEIN US3C"/>
    <property type="match status" value="1"/>
</dbReference>
<dbReference type="Pfam" id="PF07650">
    <property type="entry name" value="KH_2"/>
    <property type="match status" value="1"/>
</dbReference>
<dbReference type="Pfam" id="PF00189">
    <property type="entry name" value="Ribosomal_S3_C"/>
    <property type="match status" value="1"/>
</dbReference>
<dbReference type="SMART" id="SM00322">
    <property type="entry name" value="KH"/>
    <property type="match status" value="1"/>
</dbReference>
<dbReference type="SUPFAM" id="SSF54814">
    <property type="entry name" value="Prokaryotic type KH domain (KH-domain type II)"/>
    <property type="match status" value="1"/>
</dbReference>
<dbReference type="SUPFAM" id="SSF54821">
    <property type="entry name" value="Ribosomal protein S3 C-terminal domain"/>
    <property type="match status" value="1"/>
</dbReference>
<dbReference type="PROSITE" id="PS50823">
    <property type="entry name" value="KH_TYPE_2"/>
    <property type="match status" value="1"/>
</dbReference>
<dbReference type="PROSITE" id="PS00548">
    <property type="entry name" value="RIBOSOMAL_S3"/>
    <property type="match status" value="1"/>
</dbReference>
<evidence type="ECO:0000255" key="1">
    <source>
        <dbReference type="HAMAP-Rule" id="MF_01309"/>
    </source>
</evidence>
<evidence type="ECO:0000305" key="2"/>
<comment type="function">
    <text evidence="1">Binds the lower part of the 30S subunit head. Binds mRNA in the 70S ribosome, positioning it for translation.</text>
</comment>
<comment type="subunit">
    <text evidence="1">Part of the 30S ribosomal subunit. Forms a tight complex with proteins S10 and S14.</text>
</comment>
<comment type="similarity">
    <text evidence="1">Belongs to the universal ribosomal protein uS3 family.</text>
</comment>
<organism>
    <name type="scientific">Clostridium botulinum (strain Hall / ATCC 3502 / NCTC 13319 / Type A)</name>
    <dbReference type="NCBI Taxonomy" id="441771"/>
    <lineage>
        <taxon>Bacteria</taxon>
        <taxon>Bacillati</taxon>
        <taxon>Bacillota</taxon>
        <taxon>Clostridia</taxon>
        <taxon>Eubacteriales</taxon>
        <taxon>Clostridiaceae</taxon>
        <taxon>Clostridium</taxon>
    </lineage>
</organism>
<keyword id="KW-1185">Reference proteome</keyword>
<keyword id="KW-0687">Ribonucleoprotein</keyword>
<keyword id="KW-0689">Ribosomal protein</keyword>
<keyword id="KW-0694">RNA-binding</keyword>
<keyword id="KW-0699">rRNA-binding</keyword>
<name>RS3_CLOBH</name>
<feature type="chain" id="PRO_1000140944" description="Small ribosomal subunit protein uS3">
    <location>
        <begin position="1"/>
        <end position="223"/>
    </location>
</feature>
<feature type="domain" description="KH type-2" evidence="1">
    <location>
        <begin position="39"/>
        <end position="108"/>
    </location>
</feature>